<evidence type="ECO:0000255" key="1">
    <source>
        <dbReference type="HAMAP-Rule" id="MF_00044"/>
    </source>
</evidence>
<protein>
    <recommendedName>
        <fullName evidence="1">Aspartate--tRNA ligase</fullName>
        <ecNumber evidence="1">6.1.1.12</ecNumber>
    </recommendedName>
    <alternativeName>
        <fullName evidence="1">Aspartyl-tRNA synthetase</fullName>
        <shortName evidence="1">AspRS</shortName>
    </alternativeName>
</protein>
<dbReference type="EC" id="6.1.1.12" evidence="1"/>
<dbReference type="EMBL" id="CP000024">
    <property type="protein sequence ID" value="AAV63481.1"/>
    <property type="molecule type" value="Genomic_DNA"/>
</dbReference>
<dbReference type="RefSeq" id="WP_011227621.1">
    <property type="nucleotide sequence ID" value="NC_006449.1"/>
</dbReference>
<dbReference type="SMR" id="Q5LXN1"/>
<dbReference type="KEGG" id="stc:str1969"/>
<dbReference type="HOGENOM" id="CLU_014330_3_2_9"/>
<dbReference type="GO" id="GO:0005737">
    <property type="term" value="C:cytoplasm"/>
    <property type="evidence" value="ECO:0007669"/>
    <property type="project" value="UniProtKB-SubCell"/>
</dbReference>
<dbReference type="GO" id="GO:0004815">
    <property type="term" value="F:aspartate-tRNA ligase activity"/>
    <property type="evidence" value="ECO:0007669"/>
    <property type="project" value="UniProtKB-UniRule"/>
</dbReference>
<dbReference type="GO" id="GO:0005524">
    <property type="term" value="F:ATP binding"/>
    <property type="evidence" value="ECO:0007669"/>
    <property type="project" value="UniProtKB-UniRule"/>
</dbReference>
<dbReference type="GO" id="GO:0140096">
    <property type="term" value="F:catalytic activity, acting on a protein"/>
    <property type="evidence" value="ECO:0007669"/>
    <property type="project" value="UniProtKB-ARBA"/>
</dbReference>
<dbReference type="GO" id="GO:0003676">
    <property type="term" value="F:nucleic acid binding"/>
    <property type="evidence" value="ECO:0007669"/>
    <property type="project" value="InterPro"/>
</dbReference>
<dbReference type="GO" id="GO:0016740">
    <property type="term" value="F:transferase activity"/>
    <property type="evidence" value="ECO:0007669"/>
    <property type="project" value="UniProtKB-ARBA"/>
</dbReference>
<dbReference type="GO" id="GO:0006422">
    <property type="term" value="P:aspartyl-tRNA aminoacylation"/>
    <property type="evidence" value="ECO:0007669"/>
    <property type="project" value="UniProtKB-UniRule"/>
</dbReference>
<dbReference type="CDD" id="cd00777">
    <property type="entry name" value="AspRS_core"/>
    <property type="match status" value="1"/>
</dbReference>
<dbReference type="CDD" id="cd04317">
    <property type="entry name" value="EcAspRS_like_N"/>
    <property type="match status" value="1"/>
</dbReference>
<dbReference type="Gene3D" id="3.30.930.10">
    <property type="entry name" value="Bira Bifunctional Protein, Domain 2"/>
    <property type="match status" value="1"/>
</dbReference>
<dbReference type="Gene3D" id="3.30.1360.30">
    <property type="entry name" value="GAD-like domain"/>
    <property type="match status" value="1"/>
</dbReference>
<dbReference type="Gene3D" id="2.40.50.140">
    <property type="entry name" value="Nucleic acid-binding proteins"/>
    <property type="match status" value="1"/>
</dbReference>
<dbReference type="HAMAP" id="MF_00044">
    <property type="entry name" value="Asp_tRNA_synth_type1"/>
    <property type="match status" value="1"/>
</dbReference>
<dbReference type="InterPro" id="IPR004364">
    <property type="entry name" value="Aa-tRNA-synt_II"/>
</dbReference>
<dbReference type="InterPro" id="IPR006195">
    <property type="entry name" value="aa-tRNA-synth_II"/>
</dbReference>
<dbReference type="InterPro" id="IPR045864">
    <property type="entry name" value="aa-tRNA-synth_II/BPL/LPL"/>
</dbReference>
<dbReference type="InterPro" id="IPR004524">
    <property type="entry name" value="Asp-tRNA-ligase_1"/>
</dbReference>
<dbReference type="InterPro" id="IPR047089">
    <property type="entry name" value="Asp-tRNA-ligase_1_N"/>
</dbReference>
<dbReference type="InterPro" id="IPR002312">
    <property type="entry name" value="Asp/Asn-tRNA-synth_IIb"/>
</dbReference>
<dbReference type="InterPro" id="IPR047090">
    <property type="entry name" value="AspRS_core"/>
</dbReference>
<dbReference type="InterPro" id="IPR004115">
    <property type="entry name" value="GAD-like_sf"/>
</dbReference>
<dbReference type="InterPro" id="IPR029351">
    <property type="entry name" value="GAD_dom"/>
</dbReference>
<dbReference type="InterPro" id="IPR012340">
    <property type="entry name" value="NA-bd_OB-fold"/>
</dbReference>
<dbReference type="InterPro" id="IPR004365">
    <property type="entry name" value="NA-bd_OB_tRNA"/>
</dbReference>
<dbReference type="NCBIfam" id="TIGR00459">
    <property type="entry name" value="aspS_bact"/>
    <property type="match status" value="1"/>
</dbReference>
<dbReference type="NCBIfam" id="NF001750">
    <property type="entry name" value="PRK00476.1"/>
    <property type="match status" value="1"/>
</dbReference>
<dbReference type="PANTHER" id="PTHR22594:SF5">
    <property type="entry name" value="ASPARTATE--TRNA LIGASE, MITOCHONDRIAL"/>
    <property type="match status" value="1"/>
</dbReference>
<dbReference type="PANTHER" id="PTHR22594">
    <property type="entry name" value="ASPARTYL/LYSYL-TRNA SYNTHETASE"/>
    <property type="match status" value="1"/>
</dbReference>
<dbReference type="Pfam" id="PF02938">
    <property type="entry name" value="GAD"/>
    <property type="match status" value="1"/>
</dbReference>
<dbReference type="Pfam" id="PF00152">
    <property type="entry name" value="tRNA-synt_2"/>
    <property type="match status" value="1"/>
</dbReference>
<dbReference type="Pfam" id="PF01336">
    <property type="entry name" value="tRNA_anti-codon"/>
    <property type="match status" value="1"/>
</dbReference>
<dbReference type="PRINTS" id="PR01042">
    <property type="entry name" value="TRNASYNTHASP"/>
</dbReference>
<dbReference type="SUPFAM" id="SSF55681">
    <property type="entry name" value="Class II aaRS and biotin synthetases"/>
    <property type="match status" value="1"/>
</dbReference>
<dbReference type="SUPFAM" id="SSF55261">
    <property type="entry name" value="GAD domain-like"/>
    <property type="match status" value="1"/>
</dbReference>
<dbReference type="SUPFAM" id="SSF50249">
    <property type="entry name" value="Nucleic acid-binding proteins"/>
    <property type="match status" value="1"/>
</dbReference>
<dbReference type="PROSITE" id="PS50862">
    <property type="entry name" value="AA_TRNA_LIGASE_II"/>
    <property type="match status" value="1"/>
</dbReference>
<proteinExistence type="inferred from homology"/>
<accession>Q5LXN1</accession>
<gene>
    <name evidence="1" type="primary">aspS</name>
    <name type="ordered locus">str1969</name>
</gene>
<name>SYD_STRT1</name>
<keyword id="KW-0030">Aminoacyl-tRNA synthetase</keyword>
<keyword id="KW-0067">ATP-binding</keyword>
<keyword id="KW-0963">Cytoplasm</keyword>
<keyword id="KW-0436">Ligase</keyword>
<keyword id="KW-0547">Nucleotide-binding</keyword>
<keyword id="KW-0648">Protein biosynthesis</keyword>
<organism>
    <name type="scientific">Streptococcus thermophilus (strain CNRZ 1066)</name>
    <dbReference type="NCBI Taxonomy" id="299768"/>
    <lineage>
        <taxon>Bacteria</taxon>
        <taxon>Bacillati</taxon>
        <taxon>Bacillota</taxon>
        <taxon>Bacilli</taxon>
        <taxon>Lactobacillales</taxon>
        <taxon>Streptococcaceae</taxon>
        <taxon>Streptococcus</taxon>
    </lineage>
</organism>
<feature type="chain" id="PRO_0000110961" description="Aspartate--tRNA ligase">
    <location>
        <begin position="1"/>
        <end position="583"/>
    </location>
</feature>
<feature type="region of interest" description="Aspartate" evidence="1">
    <location>
        <begin position="198"/>
        <end position="201"/>
    </location>
</feature>
<feature type="binding site" evidence="1">
    <location>
        <position position="174"/>
    </location>
    <ligand>
        <name>L-aspartate</name>
        <dbReference type="ChEBI" id="CHEBI:29991"/>
    </ligand>
</feature>
<feature type="binding site" evidence="1">
    <location>
        <begin position="220"/>
        <end position="222"/>
    </location>
    <ligand>
        <name>ATP</name>
        <dbReference type="ChEBI" id="CHEBI:30616"/>
    </ligand>
</feature>
<feature type="binding site" evidence="1">
    <location>
        <position position="220"/>
    </location>
    <ligand>
        <name>L-aspartate</name>
        <dbReference type="ChEBI" id="CHEBI:29991"/>
    </ligand>
</feature>
<feature type="binding site" evidence="1">
    <location>
        <position position="229"/>
    </location>
    <ligand>
        <name>ATP</name>
        <dbReference type="ChEBI" id="CHEBI:30616"/>
    </ligand>
</feature>
<feature type="binding site" evidence="1">
    <location>
        <position position="443"/>
    </location>
    <ligand>
        <name>L-aspartate</name>
        <dbReference type="ChEBI" id="CHEBI:29991"/>
    </ligand>
</feature>
<feature type="binding site" evidence="1">
    <location>
        <position position="477"/>
    </location>
    <ligand>
        <name>ATP</name>
        <dbReference type="ChEBI" id="CHEBI:30616"/>
    </ligand>
</feature>
<feature type="binding site" evidence="1">
    <location>
        <position position="484"/>
    </location>
    <ligand>
        <name>L-aspartate</name>
        <dbReference type="ChEBI" id="CHEBI:29991"/>
    </ligand>
</feature>
<feature type="binding site" evidence="1">
    <location>
        <begin position="529"/>
        <end position="532"/>
    </location>
    <ligand>
        <name>ATP</name>
        <dbReference type="ChEBI" id="CHEBI:30616"/>
    </ligand>
</feature>
<reference key="1">
    <citation type="journal article" date="2004" name="Nat. Biotechnol.">
        <title>Complete sequence and comparative genome analysis of the dairy bacterium Streptococcus thermophilus.</title>
        <authorList>
            <person name="Bolotin A."/>
            <person name="Quinquis B."/>
            <person name="Renault P."/>
            <person name="Sorokin A."/>
            <person name="Ehrlich S.D."/>
            <person name="Kulakauskas S."/>
            <person name="Lapidus A."/>
            <person name="Goltsman E."/>
            <person name="Mazur M."/>
            <person name="Pusch G.D."/>
            <person name="Fonstein M."/>
            <person name="Overbeek R."/>
            <person name="Kyprides N."/>
            <person name="Purnelle B."/>
            <person name="Prozzi D."/>
            <person name="Ngui K."/>
            <person name="Masuy D."/>
            <person name="Hancy F."/>
            <person name="Burteau S."/>
            <person name="Boutry M."/>
            <person name="Delcour J."/>
            <person name="Goffeau A."/>
            <person name="Hols P."/>
        </authorList>
    </citation>
    <scope>NUCLEOTIDE SEQUENCE [LARGE SCALE GENOMIC DNA]</scope>
    <source>
        <strain>CNRZ 1066</strain>
    </source>
</reference>
<comment type="function">
    <text evidence="1">Catalyzes the attachment of L-aspartate to tRNA(Asp) in a two-step reaction: L-aspartate is first activated by ATP to form Asp-AMP and then transferred to the acceptor end of tRNA(Asp).</text>
</comment>
<comment type="catalytic activity">
    <reaction evidence="1">
        <text>tRNA(Asp) + L-aspartate + ATP = L-aspartyl-tRNA(Asp) + AMP + diphosphate</text>
        <dbReference type="Rhea" id="RHEA:19649"/>
        <dbReference type="Rhea" id="RHEA-COMP:9660"/>
        <dbReference type="Rhea" id="RHEA-COMP:9678"/>
        <dbReference type="ChEBI" id="CHEBI:29991"/>
        <dbReference type="ChEBI" id="CHEBI:30616"/>
        <dbReference type="ChEBI" id="CHEBI:33019"/>
        <dbReference type="ChEBI" id="CHEBI:78442"/>
        <dbReference type="ChEBI" id="CHEBI:78516"/>
        <dbReference type="ChEBI" id="CHEBI:456215"/>
        <dbReference type="EC" id="6.1.1.12"/>
    </reaction>
</comment>
<comment type="subunit">
    <text evidence="1">Homodimer.</text>
</comment>
<comment type="subcellular location">
    <subcellularLocation>
        <location evidence="1">Cytoplasm</location>
    </subcellularLocation>
</comment>
<comment type="similarity">
    <text evidence="1">Belongs to the class-II aminoacyl-tRNA synthetase family. Type 1 subfamily.</text>
</comment>
<sequence>MERSMYAGRVRSEHIGTTITLKGWVSRRRNLGGLIFIDLRDREGLMQLVVNPENADAAVVETAESLRSEFVIEVTGTVEAREQANDNLPTGAVELKVEDLKVLNTAKTTPFEIKDGVEASDDTRMRYRYLDLRRPEMLENFKLRAKVTHTIRNYLDDLEFIDVETPMLTKSTPEGARDYLVPSRVSQGHFYALPQSPQITKQLLMNAGFDRYYQIVKCFRDEDLRGDRQPEFTQVDLETSFLNEQEIQDITEGLIAKVMKETKGVEVTLPFPRMSYDDAMNNYGSDKPDTRFDMLLQDLTELVKDIDFKVFAEAPAVKAIVVKGNADKYSRKSIDKLTDFAKQFGAKGLAWVKMTDGVLAGPVAKFLTSIEEKLTDTLQIEENDLVLFVADTLEIANNTLGALRNQIAKELDMIDNTKFNFLWVVDWPMFEWSEEEGRYMSAHHPFTLPTEDSAAELEGDLSKVRAVAYDIVLNGYELGGGSLRINQKDLQERMLKALGFSEESAYEQFGFLLEAMDYGFPPHGGLALGLDRFVMLLAGKDNIREVIAFPKNNKASDPMTQAPSLVADKQLEELALHVELENE</sequence>